<accession>A8GVC6</accession>
<proteinExistence type="inferred from homology"/>
<name>RL5_RICB8</name>
<dbReference type="EMBL" id="CP000849">
    <property type="protein sequence ID" value="ABV78803.1"/>
    <property type="molecule type" value="Genomic_DNA"/>
</dbReference>
<dbReference type="RefSeq" id="WP_011477709.1">
    <property type="nucleotide sequence ID" value="NC_009883.1"/>
</dbReference>
<dbReference type="SMR" id="A8GVC6"/>
<dbReference type="KEGG" id="rbo:A1I_02095"/>
<dbReference type="HOGENOM" id="CLU_061015_2_1_5"/>
<dbReference type="GO" id="GO:1990904">
    <property type="term" value="C:ribonucleoprotein complex"/>
    <property type="evidence" value="ECO:0007669"/>
    <property type="project" value="UniProtKB-KW"/>
</dbReference>
<dbReference type="GO" id="GO:0005840">
    <property type="term" value="C:ribosome"/>
    <property type="evidence" value="ECO:0007669"/>
    <property type="project" value="UniProtKB-KW"/>
</dbReference>
<dbReference type="GO" id="GO:0019843">
    <property type="term" value="F:rRNA binding"/>
    <property type="evidence" value="ECO:0007669"/>
    <property type="project" value="UniProtKB-UniRule"/>
</dbReference>
<dbReference type="GO" id="GO:0003735">
    <property type="term" value="F:structural constituent of ribosome"/>
    <property type="evidence" value="ECO:0007669"/>
    <property type="project" value="InterPro"/>
</dbReference>
<dbReference type="GO" id="GO:0000049">
    <property type="term" value="F:tRNA binding"/>
    <property type="evidence" value="ECO:0007669"/>
    <property type="project" value="UniProtKB-UniRule"/>
</dbReference>
<dbReference type="GO" id="GO:0006412">
    <property type="term" value="P:translation"/>
    <property type="evidence" value="ECO:0007669"/>
    <property type="project" value="UniProtKB-UniRule"/>
</dbReference>
<dbReference type="FunFam" id="3.30.1440.10:FF:000001">
    <property type="entry name" value="50S ribosomal protein L5"/>
    <property type="match status" value="1"/>
</dbReference>
<dbReference type="Gene3D" id="3.30.1440.10">
    <property type="match status" value="1"/>
</dbReference>
<dbReference type="HAMAP" id="MF_01333_B">
    <property type="entry name" value="Ribosomal_uL5_B"/>
    <property type="match status" value="1"/>
</dbReference>
<dbReference type="InterPro" id="IPR002132">
    <property type="entry name" value="Ribosomal_uL5"/>
</dbReference>
<dbReference type="InterPro" id="IPR020930">
    <property type="entry name" value="Ribosomal_uL5_bac-type"/>
</dbReference>
<dbReference type="InterPro" id="IPR031309">
    <property type="entry name" value="Ribosomal_uL5_C"/>
</dbReference>
<dbReference type="InterPro" id="IPR022803">
    <property type="entry name" value="Ribosomal_uL5_dom_sf"/>
</dbReference>
<dbReference type="InterPro" id="IPR031310">
    <property type="entry name" value="Ribosomal_uL5_N"/>
</dbReference>
<dbReference type="NCBIfam" id="NF000585">
    <property type="entry name" value="PRK00010.1"/>
    <property type="match status" value="1"/>
</dbReference>
<dbReference type="PANTHER" id="PTHR11994">
    <property type="entry name" value="60S RIBOSOMAL PROTEIN L11-RELATED"/>
    <property type="match status" value="1"/>
</dbReference>
<dbReference type="Pfam" id="PF00281">
    <property type="entry name" value="Ribosomal_L5"/>
    <property type="match status" value="1"/>
</dbReference>
<dbReference type="Pfam" id="PF00673">
    <property type="entry name" value="Ribosomal_L5_C"/>
    <property type="match status" value="1"/>
</dbReference>
<dbReference type="PIRSF" id="PIRSF002161">
    <property type="entry name" value="Ribosomal_L5"/>
    <property type="match status" value="1"/>
</dbReference>
<dbReference type="SUPFAM" id="SSF55282">
    <property type="entry name" value="RL5-like"/>
    <property type="match status" value="1"/>
</dbReference>
<gene>
    <name evidence="1" type="primary">rplE</name>
    <name type="ordered locus">A1I_02095</name>
</gene>
<feature type="chain" id="PRO_1000052813" description="Large ribosomal subunit protein uL5">
    <location>
        <begin position="1"/>
        <end position="179"/>
    </location>
</feature>
<evidence type="ECO:0000255" key="1">
    <source>
        <dbReference type="HAMAP-Rule" id="MF_01333"/>
    </source>
</evidence>
<evidence type="ECO:0000305" key="2"/>
<reference key="1">
    <citation type="submission" date="2007-09" db="EMBL/GenBank/DDBJ databases">
        <title>Complete genome sequencing of Rickettsia bellii.</title>
        <authorList>
            <person name="Madan A."/>
            <person name="Lee H."/>
            <person name="Madan A."/>
            <person name="Yoon J.-G."/>
            <person name="Ryu G.-Y."/>
            <person name="Dasch G."/>
            <person name="Ereemeva M."/>
        </authorList>
    </citation>
    <scope>NUCLEOTIDE SEQUENCE [LARGE SCALE GENOMIC DNA]</scope>
    <source>
        <strain>OSU 85-389</strain>
    </source>
</reference>
<organism>
    <name type="scientific">Rickettsia bellii (strain OSU 85-389)</name>
    <dbReference type="NCBI Taxonomy" id="391896"/>
    <lineage>
        <taxon>Bacteria</taxon>
        <taxon>Pseudomonadati</taxon>
        <taxon>Pseudomonadota</taxon>
        <taxon>Alphaproteobacteria</taxon>
        <taxon>Rickettsiales</taxon>
        <taxon>Rickettsiaceae</taxon>
        <taxon>Rickettsieae</taxon>
        <taxon>Rickettsia</taxon>
        <taxon>belli group</taxon>
    </lineage>
</organism>
<comment type="function">
    <text evidence="1">This is one of the proteins that bind and probably mediate the attachment of the 5S RNA into the large ribosomal subunit, where it forms part of the central protuberance. In the 70S ribosome it contacts protein S13 of the 30S subunit (bridge B1b), connecting the 2 subunits; this bridge is implicated in subunit movement. Contacts the P site tRNA; the 5S rRNA and some of its associated proteins might help stabilize positioning of ribosome-bound tRNAs.</text>
</comment>
<comment type="subunit">
    <text evidence="1">Part of the 50S ribosomal subunit; part of the 5S rRNA/L5/L18/L25 subcomplex. Contacts the 5S rRNA and the P site tRNA. Forms a bridge to the 30S subunit in the 70S ribosome.</text>
</comment>
<comment type="similarity">
    <text evidence="1">Belongs to the universal ribosomal protein uL5 family.</text>
</comment>
<protein>
    <recommendedName>
        <fullName evidence="1">Large ribosomal subunit protein uL5</fullName>
    </recommendedName>
    <alternativeName>
        <fullName evidence="2">50S ribosomal protein L5</fullName>
    </alternativeName>
</protein>
<sequence length="179" mass="20448">MLRFKELYQKEIISNLQKEFSYKNKHEIPAIEKIVINMGVGEAIADSKVIDKAVNDLTLISGQKPFVTSARKSIATFKLRDGMKIGCKVTLRKDRMYDFLERLVIVALPRVKEFRGFSYKSFDGKGNFTFGLKEQIVFPEINYDKIDSIRGMDITIVTSAKTDKEGKSLLSGFNLPFYN</sequence>
<keyword id="KW-0687">Ribonucleoprotein</keyword>
<keyword id="KW-0689">Ribosomal protein</keyword>
<keyword id="KW-0694">RNA-binding</keyword>
<keyword id="KW-0699">rRNA-binding</keyword>
<keyword id="KW-0820">tRNA-binding</keyword>